<proteinExistence type="inferred from homology"/>
<sequence length="237" mass="24952">MKLLIDAGNSRVKWALYQGEDCVRQGAAEHGELAGLAAVWRDLPLTGAWMSSVARREVADALAAAVPCPLHRVHAERRFGDVRNHYRNTAEQGADRWLAVLAARELCRGDVIVACAGTALTVEALTAEGDYLGGLILPGHGLMLQSLAQGTANLNRPAGEVVDFPQGTQDALASGAIAALAGAIAEQRRRLAERTGRAPATVILTGGDAARIAPWLAAPMQIVDNLVLMGLLKVANT</sequence>
<evidence type="ECO:0000255" key="1">
    <source>
        <dbReference type="HAMAP-Rule" id="MF_01274"/>
    </source>
</evidence>
<name>COAX_CHRVO</name>
<protein>
    <recommendedName>
        <fullName evidence="1">Type III pantothenate kinase</fullName>
        <ecNumber evidence="1">2.7.1.33</ecNumber>
    </recommendedName>
    <alternativeName>
        <fullName evidence="1">PanK-III</fullName>
    </alternativeName>
    <alternativeName>
        <fullName evidence="1">Pantothenic acid kinase</fullName>
    </alternativeName>
</protein>
<keyword id="KW-0067">ATP-binding</keyword>
<keyword id="KW-0173">Coenzyme A biosynthesis</keyword>
<keyword id="KW-0963">Cytoplasm</keyword>
<keyword id="KW-0418">Kinase</keyword>
<keyword id="KW-0547">Nucleotide-binding</keyword>
<keyword id="KW-0630">Potassium</keyword>
<keyword id="KW-1185">Reference proteome</keyword>
<keyword id="KW-0808">Transferase</keyword>
<gene>
    <name evidence="1" type="primary">coaX</name>
    <name type="ordered locus">CV_0487</name>
</gene>
<organism>
    <name type="scientific">Chromobacterium violaceum (strain ATCC 12472 / DSM 30191 / JCM 1249 / CCUG 213 / NBRC 12614 / NCIMB 9131 / NCTC 9757 / MK)</name>
    <dbReference type="NCBI Taxonomy" id="243365"/>
    <lineage>
        <taxon>Bacteria</taxon>
        <taxon>Pseudomonadati</taxon>
        <taxon>Pseudomonadota</taxon>
        <taxon>Betaproteobacteria</taxon>
        <taxon>Neisseriales</taxon>
        <taxon>Chromobacteriaceae</taxon>
        <taxon>Chromobacterium</taxon>
    </lineage>
</organism>
<accession>Q7P0S9</accession>
<comment type="function">
    <text evidence="1">Catalyzes the phosphorylation of pantothenate (Pan), the first step in CoA biosynthesis.</text>
</comment>
<comment type="catalytic activity">
    <reaction evidence="1">
        <text>(R)-pantothenate + ATP = (R)-4'-phosphopantothenate + ADP + H(+)</text>
        <dbReference type="Rhea" id="RHEA:16373"/>
        <dbReference type="ChEBI" id="CHEBI:10986"/>
        <dbReference type="ChEBI" id="CHEBI:15378"/>
        <dbReference type="ChEBI" id="CHEBI:29032"/>
        <dbReference type="ChEBI" id="CHEBI:30616"/>
        <dbReference type="ChEBI" id="CHEBI:456216"/>
        <dbReference type="EC" id="2.7.1.33"/>
    </reaction>
</comment>
<comment type="cofactor">
    <cofactor evidence="1">
        <name>NH4(+)</name>
        <dbReference type="ChEBI" id="CHEBI:28938"/>
    </cofactor>
    <cofactor evidence="1">
        <name>K(+)</name>
        <dbReference type="ChEBI" id="CHEBI:29103"/>
    </cofactor>
    <text evidence="1">A monovalent cation. Ammonium or potassium.</text>
</comment>
<comment type="pathway">
    <text evidence="1">Cofactor biosynthesis; coenzyme A biosynthesis; CoA from (R)-pantothenate: step 1/5.</text>
</comment>
<comment type="subunit">
    <text evidence="1">Homodimer.</text>
</comment>
<comment type="subcellular location">
    <subcellularLocation>
        <location evidence="1">Cytoplasm</location>
    </subcellularLocation>
</comment>
<comment type="similarity">
    <text evidence="1">Belongs to the type III pantothenate kinase family.</text>
</comment>
<feature type="chain" id="PRO_0000270871" description="Type III pantothenate kinase">
    <location>
        <begin position="1"/>
        <end position="237"/>
    </location>
</feature>
<feature type="active site" description="Proton acceptor" evidence="1">
    <location>
        <position position="95"/>
    </location>
</feature>
<feature type="binding site" evidence="1">
    <location>
        <begin position="6"/>
        <end position="13"/>
    </location>
    <ligand>
        <name>ATP</name>
        <dbReference type="ChEBI" id="CHEBI:30616"/>
    </ligand>
</feature>
<feature type="binding site" evidence="1">
    <location>
        <position position="86"/>
    </location>
    <ligand>
        <name>substrate</name>
    </ligand>
</feature>
<feature type="binding site" evidence="1">
    <location>
        <begin position="93"/>
        <end position="96"/>
    </location>
    <ligand>
        <name>substrate</name>
    </ligand>
</feature>
<feature type="binding site" evidence="1">
    <location>
        <position position="118"/>
    </location>
    <ligand>
        <name>ATP</name>
        <dbReference type="ChEBI" id="CHEBI:30616"/>
    </ligand>
</feature>
<feature type="binding site" evidence="1">
    <location>
        <position position="168"/>
    </location>
    <ligand>
        <name>substrate</name>
    </ligand>
</feature>
<dbReference type="EC" id="2.7.1.33" evidence="1"/>
<dbReference type="EMBL" id="AE016825">
    <property type="protein sequence ID" value="AAQ58164.1"/>
    <property type="molecule type" value="Genomic_DNA"/>
</dbReference>
<dbReference type="RefSeq" id="WP_011134042.1">
    <property type="nucleotide sequence ID" value="NC_005085.1"/>
</dbReference>
<dbReference type="SMR" id="Q7P0S9"/>
<dbReference type="STRING" id="243365.CV_0487"/>
<dbReference type="GeneID" id="66365601"/>
<dbReference type="KEGG" id="cvi:CV_0487"/>
<dbReference type="eggNOG" id="COG1521">
    <property type="taxonomic scope" value="Bacteria"/>
</dbReference>
<dbReference type="HOGENOM" id="CLU_066627_0_0_4"/>
<dbReference type="OrthoDB" id="9781305at2"/>
<dbReference type="UniPathway" id="UPA00241">
    <property type="reaction ID" value="UER00352"/>
</dbReference>
<dbReference type="Proteomes" id="UP000001424">
    <property type="component" value="Chromosome"/>
</dbReference>
<dbReference type="GO" id="GO:0005737">
    <property type="term" value="C:cytoplasm"/>
    <property type="evidence" value="ECO:0007669"/>
    <property type="project" value="UniProtKB-SubCell"/>
</dbReference>
<dbReference type="GO" id="GO:0005524">
    <property type="term" value="F:ATP binding"/>
    <property type="evidence" value="ECO:0007669"/>
    <property type="project" value="UniProtKB-UniRule"/>
</dbReference>
<dbReference type="GO" id="GO:0004594">
    <property type="term" value="F:pantothenate kinase activity"/>
    <property type="evidence" value="ECO:0007669"/>
    <property type="project" value="UniProtKB-UniRule"/>
</dbReference>
<dbReference type="GO" id="GO:0015937">
    <property type="term" value="P:coenzyme A biosynthetic process"/>
    <property type="evidence" value="ECO:0007669"/>
    <property type="project" value="UniProtKB-UniRule"/>
</dbReference>
<dbReference type="CDD" id="cd24015">
    <property type="entry name" value="ASKHA_NBD_PanK-III"/>
    <property type="match status" value="1"/>
</dbReference>
<dbReference type="Gene3D" id="3.30.420.40">
    <property type="match status" value="2"/>
</dbReference>
<dbReference type="HAMAP" id="MF_01274">
    <property type="entry name" value="Pantothen_kinase_3"/>
    <property type="match status" value="1"/>
</dbReference>
<dbReference type="InterPro" id="IPR043129">
    <property type="entry name" value="ATPase_NBD"/>
</dbReference>
<dbReference type="InterPro" id="IPR004619">
    <property type="entry name" value="Type_III_PanK"/>
</dbReference>
<dbReference type="NCBIfam" id="TIGR00671">
    <property type="entry name" value="baf"/>
    <property type="match status" value="1"/>
</dbReference>
<dbReference type="PANTHER" id="PTHR34265">
    <property type="entry name" value="TYPE III PANTOTHENATE KINASE"/>
    <property type="match status" value="1"/>
</dbReference>
<dbReference type="PANTHER" id="PTHR34265:SF1">
    <property type="entry name" value="TYPE III PANTOTHENATE KINASE"/>
    <property type="match status" value="1"/>
</dbReference>
<dbReference type="Pfam" id="PF03309">
    <property type="entry name" value="Pan_kinase"/>
    <property type="match status" value="1"/>
</dbReference>
<dbReference type="SUPFAM" id="SSF53067">
    <property type="entry name" value="Actin-like ATPase domain"/>
    <property type="match status" value="2"/>
</dbReference>
<reference key="1">
    <citation type="journal article" date="2003" name="Proc. Natl. Acad. Sci. U.S.A.">
        <title>The complete genome sequence of Chromobacterium violaceum reveals remarkable and exploitable bacterial adaptability.</title>
        <authorList>
            <person name="Vasconcelos A.T.R."/>
            <person name="de Almeida D.F."/>
            <person name="Hungria M."/>
            <person name="Guimaraes C.T."/>
            <person name="Antonio R.V."/>
            <person name="Almeida F.C."/>
            <person name="de Almeida L.G.P."/>
            <person name="de Almeida R."/>
            <person name="Alves-Gomes J.A."/>
            <person name="Andrade E.M."/>
            <person name="Araripe J."/>
            <person name="de Araujo M.F.F."/>
            <person name="Astolfi-Filho S."/>
            <person name="Azevedo V."/>
            <person name="Baptista A.J."/>
            <person name="Bataus L.A.M."/>
            <person name="Batista J.S."/>
            <person name="Belo A."/>
            <person name="van den Berg C."/>
            <person name="Bogo M."/>
            <person name="Bonatto S."/>
            <person name="Bordignon J."/>
            <person name="Brigido M.M."/>
            <person name="Brito C.A."/>
            <person name="Brocchi M."/>
            <person name="Burity H.A."/>
            <person name="Camargo A.A."/>
            <person name="Cardoso D.D.P."/>
            <person name="Carneiro N.P."/>
            <person name="Carraro D.M."/>
            <person name="Carvalho C.M.B."/>
            <person name="Cascardo J.C.M."/>
            <person name="Cavada B.S."/>
            <person name="Chueire L.M.O."/>
            <person name="Creczynski-Pasa T.B."/>
            <person name="Cunha-Junior N.C."/>
            <person name="Fagundes N."/>
            <person name="Falcao C.L."/>
            <person name="Fantinatti F."/>
            <person name="Farias I.P."/>
            <person name="Felipe M.S.S."/>
            <person name="Ferrari L.P."/>
            <person name="Ferro J.A."/>
            <person name="Ferro M.I.T."/>
            <person name="Franco G.R."/>
            <person name="Freitas N.S.A."/>
            <person name="Furlan L.R."/>
            <person name="Gazzinelli R.T."/>
            <person name="Gomes E.A."/>
            <person name="Goncalves P.R."/>
            <person name="Grangeiro T.B."/>
            <person name="Grattapaglia D."/>
            <person name="Grisard E.C."/>
            <person name="Hanna E.S."/>
            <person name="Jardim S.N."/>
            <person name="Laurino J."/>
            <person name="Leoi L.C.T."/>
            <person name="Lima L.F.A."/>
            <person name="Loureiro M.F."/>
            <person name="Lyra M.C.C.P."/>
            <person name="Madeira H.M.F."/>
            <person name="Manfio G.P."/>
            <person name="Maranhao A.Q."/>
            <person name="Martins W.S."/>
            <person name="di Mauro S.M.Z."/>
            <person name="de Medeiros S.R.B."/>
            <person name="Meissner R.V."/>
            <person name="Moreira M.A.M."/>
            <person name="Nascimento F.F."/>
            <person name="Nicolas M.F."/>
            <person name="Oliveira J.G."/>
            <person name="Oliveira S.C."/>
            <person name="Paixao R.F.C."/>
            <person name="Parente J.A."/>
            <person name="Pedrosa F.O."/>
            <person name="Pena S.D.J."/>
            <person name="Pereira J.O."/>
            <person name="Pereira M."/>
            <person name="Pinto L.S.R.C."/>
            <person name="Pinto L.S."/>
            <person name="Porto J.I.R."/>
            <person name="Potrich D.P."/>
            <person name="Ramalho-Neto C.E."/>
            <person name="Reis A.M.M."/>
            <person name="Rigo L.U."/>
            <person name="Rondinelli E."/>
            <person name="Santos E.B.P."/>
            <person name="Santos F.R."/>
            <person name="Schneider M.P.C."/>
            <person name="Seuanez H.N."/>
            <person name="Silva A.M.R."/>
            <person name="da Silva A.L.C."/>
            <person name="Silva D.W."/>
            <person name="Silva R."/>
            <person name="Simoes I.C."/>
            <person name="Simon D."/>
            <person name="Soares C.M.A."/>
            <person name="Soares R.B.A."/>
            <person name="Souza E.M."/>
            <person name="Souza K.R.L."/>
            <person name="Souza R.C."/>
            <person name="Steffens M.B.R."/>
            <person name="Steindel M."/>
            <person name="Teixeira S.R."/>
            <person name="Urmenyi T."/>
            <person name="Vettore A."/>
            <person name="Wassem R."/>
            <person name="Zaha A."/>
            <person name="Simpson A.J.G."/>
        </authorList>
    </citation>
    <scope>NUCLEOTIDE SEQUENCE [LARGE SCALE GENOMIC DNA]</scope>
    <source>
        <strain>ATCC 12472 / DSM 30191 / JCM 1249 / CCUG 213 / NBRC 12614 / NCIMB 9131 / NCTC 9757 / MK</strain>
    </source>
</reference>